<name>WRK18_ARATH</name>
<sequence length="310" mass="34766">MDGSSFLDISLDLNTNPFSAKLPKKEVSVLASTHLKRKWLEQDESASELREELNRVNSENKKLTEMLARVCESYNELHNHLEKLQSRQSPEIEQTDIPIKKRKQDPDEFLGFPIGLSSGKTENSSSNEDHHHHHQQHEQKNQLLSCKRPVTDSFNKAKVSTVYVPTETSDTSLTVKDGFQWRKYGQKVTRDNPSPRAYFRCSFAPSCPVKKKVQRSAEDPSLLVATYEGTHNHLGPNASEGDATSQGGSSTVTLDLVNGCHRLALEKNERDNTMQEVLIQQMASSLTKDSKFTAALAAAISGRLMEQSRT</sequence>
<organism>
    <name type="scientific">Arabidopsis thaliana</name>
    <name type="common">Mouse-ear cress</name>
    <dbReference type="NCBI Taxonomy" id="3702"/>
    <lineage>
        <taxon>Eukaryota</taxon>
        <taxon>Viridiplantae</taxon>
        <taxon>Streptophyta</taxon>
        <taxon>Embryophyta</taxon>
        <taxon>Tracheophyta</taxon>
        <taxon>Spermatophyta</taxon>
        <taxon>Magnoliopsida</taxon>
        <taxon>eudicotyledons</taxon>
        <taxon>Gunneridae</taxon>
        <taxon>Pentapetalae</taxon>
        <taxon>rosids</taxon>
        <taxon>malvids</taxon>
        <taxon>Brassicales</taxon>
        <taxon>Brassicaceae</taxon>
        <taxon>Camelineae</taxon>
        <taxon>Arabidopsis</taxon>
    </lineage>
</organism>
<proteinExistence type="evidence at protein level"/>
<accession>Q9C5T4</accession>
<accession>O81768</accession>
<accession>Q944H8</accession>
<reference key="1">
    <citation type="journal article" date="2001" name="Plant Cell">
        <title>Evidence for an important role of WRKY DNA binding proteins in the regulation of NPR1 gene expression.</title>
        <authorList>
            <person name="Yu D."/>
            <person name="Chen C."/>
            <person name="Chen Z."/>
        </authorList>
    </citation>
    <scope>NUCLEOTIDE SEQUENCE</scope>
    <scope>INDUCTION</scope>
</reference>
<reference key="2">
    <citation type="journal article" date="1999" name="Nature">
        <title>Sequence and analysis of chromosome 4 of the plant Arabidopsis thaliana.</title>
        <authorList>
            <person name="Mayer K.F.X."/>
            <person name="Schueller C."/>
            <person name="Wambutt R."/>
            <person name="Murphy G."/>
            <person name="Volckaert G."/>
            <person name="Pohl T."/>
            <person name="Duesterhoeft A."/>
            <person name="Stiekema W."/>
            <person name="Entian K.-D."/>
            <person name="Terryn N."/>
            <person name="Harris B."/>
            <person name="Ansorge W."/>
            <person name="Brandt P."/>
            <person name="Grivell L.A."/>
            <person name="Rieger M."/>
            <person name="Weichselgartner M."/>
            <person name="de Simone V."/>
            <person name="Obermaier B."/>
            <person name="Mache R."/>
            <person name="Mueller M."/>
            <person name="Kreis M."/>
            <person name="Delseny M."/>
            <person name="Puigdomenech P."/>
            <person name="Watson M."/>
            <person name="Schmidtheini T."/>
            <person name="Reichert B."/>
            <person name="Portetelle D."/>
            <person name="Perez-Alonso M."/>
            <person name="Boutry M."/>
            <person name="Bancroft I."/>
            <person name="Vos P."/>
            <person name="Hoheisel J."/>
            <person name="Zimmermann W."/>
            <person name="Wedler H."/>
            <person name="Ridley P."/>
            <person name="Langham S.-A."/>
            <person name="McCullagh B."/>
            <person name="Bilham L."/>
            <person name="Robben J."/>
            <person name="van der Schueren J."/>
            <person name="Grymonprez B."/>
            <person name="Chuang Y.-J."/>
            <person name="Vandenbussche F."/>
            <person name="Braeken M."/>
            <person name="Weltjens I."/>
            <person name="Voet M."/>
            <person name="Bastiaens I."/>
            <person name="Aert R."/>
            <person name="Defoor E."/>
            <person name="Weitzenegger T."/>
            <person name="Bothe G."/>
            <person name="Ramsperger U."/>
            <person name="Hilbert H."/>
            <person name="Braun M."/>
            <person name="Holzer E."/>
            <person name="Brandt A."/>
            <person name="Peters S."/>
            <person name="van Staveren M."/>
            <person name="Dirkse W."/>
            <person name="Mooijman P."/>
            <person name="Klein Lankhorst R."/>
            <person name="Rose M."/>
            <person name="Hauf J."/>
            <person name="Koetter P."/>
            <person name="Berneiser S."/>
            <person name="Hempel S."/>
            <person name="Feldpausch M."/>
            <person name="Lamberth S."/>
            <person name="Van den Daele H."/>
            <person name="De Keyser A."/>
            <person name="Buysshaert C."/>
            <person name="Gielen J."/>
            <person name="Villarroel R."/>
            <person name="De Clercq R."/>
            <person name="van Montagu M."/>
            <person name="Rogers J."/>
            <person name="Cronin A."/>
            <person name="Quail M.A."/>
            <person name="Bray-Allen S."/>
            <person name="Clark L."/>
            <person name="Doggett J."/>
            <person name="Hall S."/>
            <person name="Kay M."/>
            <person name="Lennard N."/>
            <person name="McLay K."/>
            <person name="Mayes R."/>
            <person name="Pettett A."/>
            <person name="Rajandream M.A."/>
            <person name="Lyne M."/>
            <person name="Benes V."/>
            <person name="Rechmann S."/>
            <person name="Borkova D."/>
            <person name="Bloecker H."/>
            <person name="Scharfe M."/>
            <person name="Grimm M."/>
            <person name="Loehnert T.-H."/>
            <person name="Dose S."/>
            <person name="de Haan M."/>
            <person name="Maarse A.C."/>
            <person name="Schaefer M."/>
            <person name="Mueller-Auer S."/>
            <person name="Gabel C."/>
            <person name="Fuchs M."/>
            <person name="Fartmann B."/>
            <person name="Granderath K."/>
            <person name="Dauner D."/>
            <person name="Herzl A."/>
            <person name="Neumann S."/>
            <person name="Argiriou A."/>
            <person name="Vitale D."/>
            <person name="Liguori R."/>
            <person name="Piravandi E."/>
            <person name="Massenet O."/>
            <person name="Quigley F."/>
            <person name="Clabauld G."/>
            <person name="Muendlein A."/>
            <person name="Felber R."/>
            <person name="Schnabl S."/>
            <person name="Hiller R."/>
            <person name="Schmidt W."/>
            <person name="Lecharny A."/>
            <person name="Aubourg S."/>
            <person name="Chefdor F."/>
            <person name="Cooke R."/>
            <person name="Berger C."/>
            <person name="Monfort A."/>
            <person name="Casacuberta E."/>
            <person name="Gibbons T."/>
            <person name="Weber N."/>
            <person name="Vandenbol M."/>
            <person name="Bargues M."/>
            <person name="Terol J."/>
            <person name="Torres A."/>
            <person name="Perez-Perez A."/>
            <person name="Purnelle B."/>
            <person name="Bent E."/>
            <person name="Johnson S."/>
            <person name="Tacon D."/>
            <person name="Jesse T."/>
            <person name="Heijnen L."/>
            <person name="Schwarz S."/>
            <person name="Scholler P."/>
            <person name="Heber S."/>
            <person name="Francs P."/>
            <person name="Bielke C."/>
            <person name="Frishman D."/>
            <person name="Haase D."/>
            <person name="Lemcke K."/>
            <person name="Mewes H.-W."/>
            <person name="Stocker S."/>
            <person name="Zaccaria P."/>
            <person name="Bevan M."/>
            <person name="Wilson R.K."/>
            <person name="de la Bastide M."/>
            <person name="Habermann K."/>
            <person name="Parnell L."/>
            <person name="Dedhia N."/>
            <person name="Gnoj L."/>
            <person name="Schutz K."/>
            <person name="Huang E."/>
            <person name="Spiegel L."/>
            <person name="Sekhon M."/>
            <person name="Murray J."/>
            <person name="Sheet P."/>
            <person name="Cordes M."/>
            <person name="Abu-Threideh J."/>
            <person name="Stoneking T."/>
            <person name="Kalicki J."/>
            <person name="Graves T."/>
            <person name="Harmon G."/>
            <person name="Edwards J."/>
            <person name="Latreille P."/>
            <person name="Courtney L."/>
            <person name="Cloud J."/>
            <person name="Abbott A."/>
            <person name="Scott K."/>
            <person name="Johnson D."/>
            <person name="Minx P."/>
            <person name="Bentley D."/>
            <person name="Fulton B."/>
            <person name="Miller N."/>
            <person name="Greco T."/>
            <person name="Kemp K."/>
            <person name="Kramer J."/>
            <person name="Fulton L."/>
            <person name="Mardis E."/>
            <person name="Dante M."/>
            <person name="Pepin K."/>
            <person name="Hillier L.W."/>
            <person name="Nelson J."/>
            <person name="Spieth J."/>
            <person name="Ryan E."/>
            <person name="Andrews S."/>
            <person name="Geisel C."/>
            <person name="Layman D."/>
            <person name="Du H."/>
            <person name="Ali J."/>
            <person name="Berghoff A."/>
            <person name="Jones K."/>
            <person name="Drone K."/>
            <person name="Cotton M."/>
            <person name="Joshu C."/>
            <person name="Antonoiu B."/>
            <person name="Zidanic M."/>
            <person name="Strong C."/>
            <person name="Sun H."/>
            <person name="Lamar B."/>
            <person name="Yordan C."/>
            <person name="Ma P."/>
            <person name="Zhong J."/>
            <person name="Preston R."/>
            <person name="Vil D."/>
            <person name="Shekher M."/>
            <person name="Matero A."/>
            <person name="Shah R."/>
            <person name="Swaby I.K."/>
            <person name="O'Shaughnessy A."/>
            <person name="Rodriguez M."/>
            <person name="Hoffman J."/>
            <person name="Till S."/>
            <person name="Granat S."/>
            <person name="Shohdy N."/>
            <person name="Hasegawa A."/>
            <person name="Hameed A."/>
            <person name="Lodhi M."/>
            <person name="Johnson A."/>
            <person name="Chen E."/>
            <person name="Marra M.A."/>
            <person name="Martienssen R."/>
            <person name="McCombie W.R."/>
        </authorList>
    </citation>
    <scope>NUCLEOTIDE SEQUENCE [LARGE SCALE GENOMIC DNA]</scope>
    <source>
        <strain>cv. Columbia</strain>
    </source>
</reference>
<reference key="3">
    <citation type="journal article" date="2017" name="Plant J.">
        <title>Araport11: a complete reannotation of the Arabidopsis thaliana reference genome.</title>
        <authorList>
            <person name="Cheng C.Y."/>
            <person name="Krishnakumar V."/>
            <person name="Chan A.P."/>
            <person name="Thibaud-Nissen F."/>
            <person name="Schobel S."/>
            <person name="Town C.D."/>
        </authorList>
    </citation>
    <scope>GENOME REANNOTATION</scope>
    <source>
        <strain>cv. Columbia</strain>
    </source>
</reference>
<reference key="4">
    <citation type="journal article" date="2003" name="Science">
        <title>Empirical analysis of transcriptional activity in the Arabidopsis genome.</title>
        <authorList>
            <person name="Yamada K."/>
            <person name="Lim J."/>
            <person name="Dale J.M."/>
            <person name="Chen H."/>
            <person name="Shinn P."/>
            <person name="Palm C.J."/>
            <person name="Southwick A.M."/>
            <person name="Wu H.C."/>
            <person name="Kim C.J."/>
            <person name="Nguyen M."/>
            <person name="Pham P.K."/>
            <person name="Cheuk R.F."/>
            <person name="Karlin-Newmann G."/>
            <person name="Liu S.X."/>
            <person name="Lam B."/>
            <person name="Sakano H."/>
            <person name="Wu T."/>
            <person name="Yu G."/>
            <person name="Miranda M."/>
            <person name="Quach H.L."/>
            <person name="Tripp M."/>
            <person name="Chang C.H."/>
            <person name="Lee J.M."/>
            <person name="Toriumi M.J."/>
            <person name="Chan M.M."/>
            <person name="Tang C.C."/>
            <person name="Onodera C.S."/>
            <person name="Deng J.M."/>
            <person name="Akiyama K."/>
            <person name="Ansari Y."/>
            <person name="Arakawa T."/>
            <person name="Banh J."/>
            <person name="Banno F."/>
            <person name="Bowser L."/>
            <person name="Brooks S.Y."/>
            <person name="Carninci P."/>
            <person name="Chao Q."/>
            <person name="Choy N."/>
            <person name="Enju A."/>
            <person name="Goldsmith A.D."/>
            <person name="Gurjal M."/>
            <person name="Hansen N.F."/>
            <person name="Hayashizaki Y."/>
            <person name="Johnson-Hopson C."/>
            <person name="Hsuan V.W."/>
            <person name="Iida K."/>
            <person name="Karnes M."/>
            <person name="Khan S."/>
            <person name="Koesema E."/>
            <person name="Ishida J."/>
            <person name="Jiang P.X."/>
            <person name="Jones T."/>
            <person name="Kawai J."/>
            <person name="Kamiya A."/>
            <person name="Meyers C."/>
            <person name="Nakajima M."/>
            <person name="Narusaka M."/>
            <person name="Seki M."/>
            <person name="Sakurai T."/>
            <person name="Satou M."/>
            <person name="Tamse R."/>
            <person name="Vaysberg M."/>
            <person name="Wallender E.K."/>
            <person name="Wong C."/>
            <person name="Yamamura Y."/>
            <person name="Yuan S."/>
            <person name="Shinozaki K."/>
            <person name="Davis R.W."/>
            <person name="Theologis A."/>
            <person name="Ecker J.R."/>
        </authorList>
    </citation>
    <scope>NUCLEOTIDE SEQUENCE [LARGE SCALE MRNA]</scope>
    <source>
        <strain>cv. Columbia</strain>
    </source>
</reference>
<reference key="5">
    <citation type="submission" date="2002-03" db="EMBL/GenBank/DDBJ databases">
        <title>Full-length cDNA from Arabidopsis thaliana.</title>
        <authorList>
            <person name="Brover V.V."/>
            <person name="Troukhan M.E."/>
            <person name="Alexandrov N.A."/>
            <person name="Lu Y.-P."/>
            <person name="Flavell R.B."/>
            <person name="Feldmann K.A."/>
        </authorList>
    </citation>
    <scope>NUCLEOTIDE SEQUENCE [LARGE SCALE MRNA]</scope>
</reference>
<reference key="6">
    <citation type="journal article" date="2002" name="Plant Physiol.">
        <title>Potentiation of developmentally regulated plant defense response by AtWRKY18, a pathogen-induced Arabidopsis transcription factor.</title>
        <authorList>
            <person name="Chen C."/>
            <person name="Chen Z."/>
        </authorList>
    </citation>
    <scope>FUNCTION</scope>
    <scope>INDUCTION</scope>
</reference>
<feature type="chain" id="PRO_0000133660" description="WRKY transcription factor 18">
    <location>
        <begin position="1"/>
        <end position="310"/>
    </location>
</feature>
<feature type="DNA-binding region" description="WRKY" evidence="1">
    <location>
        <begin position="170"/>
        <end position="236"/>
    </location>
</feature>
<feature type="region of interest" description="Disordered" evidence="2">
    <location>
        <begin position="82"/>
        <end position="145"/>
    </location>
</feature>
<feature type="region of interest" description="Disordered" evidence="2">
    <location>
        <begin position="230"/>
        <end position="250"/>
    </location>
</feature>
<feature type="sequence conflict" description="In Ref. 1 and 5." evidence="5" ref="1 5">
    <original>D</original>
    <variation>N</variation>
    <location>
        <position position="271"/>
    </location>
</feature>
<feature type="strand" evidence="6">
    <location>
        <begin position="160"/>
        <end position="165"/>
    </location>
</feature>
<feature type="strand" evidence="6">
    <location>
        <begin position="181"/>
        <end position="189"/>
    </location>
</feature>
<feature type="strand" evidence="6">
    <location>
        <begin position="192"/>
        <end position="201"/>
    </location>
</feature>
<feature type="turn" evidence="6">
    <location>
        <begin position="202"/>
        <end position="206"/>
    </location>
</feature>
<feature type="strand" evidence="6">
    <location>
        <begin position="210"/>
        <end position="215"/>
    </location>
</feature>
<feature type="strand" evidence="6">
    <location>
        <begin position="222"/>
        <end position="229"/>
    </location>
</feature>
<protein>
    <recommendedName>
        <fullName>WRKY transcription factor 18</fullName>
    </recommendedName>
    <alternativeName>
        <fullName>WRKY DNA-binding protein 18</fullName>
        <shortName>AtWRKY18</shortName>
    </alternativeName>
</protein>
<comment type="function">
    <text evidence="4">Transcription factor. Interacts specifically with the W box (5'-(T)TGAC[CT]-3'), a frequently occurring elicitor-responsive cis-acting element. Positively modulates defense-related gene expression and disease resistance.</text>
</comment>
<comment type="interaction">
    <interactant intactId="EBI-1993349">
        <id>Q9C5T4</id>
    </interactant>
    <interactant intactId="EBI-449157">
        <id>Q42403</id>
        <label>TRX3</label>
    </interactant>
    <organismsDiffer>false</organismsDiffer>
    <experiments>3</experiments>
</comment>
<comment type="interaction">
    <interactant intactId="EBI-1993349">
        <id>Q9C5T4</id>
    </interactant>
    <interactant intactId="EBI-1993349">
        <id>Q9C5T4</id>
        <label>WRKY18</label>
    </interactant>
    <organismsDiffer>false</organismsDiffer>
    <experiments>4</experiments>
</comment>
<comment type="interaction">
    <interactant intactId="EBI-1993349">
        <id>Q9C5T4</id>
    </interactant>
    <interactant intactId="EBI-1993363">
        <id>Q9SAH7</id>
        <label>WRKY40</label>
    </interactant>
    <organismsDiffer>false</organismsDiffer>
    <experiments>7</experiments>
</comment>
<comment type="interaction">
    <interactant intactId="EBI-1993349">
        <id>Q9C5T4</id>
    </interactant>
    <interactant intactId="EBI-2112777">
        <id>Q9SK33</id>
        <label>WRKY60</label>
    </interactant>
    <organismsDiffer>false</organismsDiffer>
    <experiments>7</experiments>
</comment>
<comment type="subcellular location">
    <subcellularLocation>
        <location evidence="5">Nucleus</location>
    </subcellularLocation>
</comment>
<comment type="alternative products">
    <event type="alternative splicing"/>
    <isoform>
        <id>Q9C5T4-1</id>
        <name>1</name>
        <sequence type="displayed"/>
    </isoform>
    <text>A number of isoforms are produced. According to EST sequences.</text>
</comment>
<comment type="induction">
    <text evidence="3 4">By salicylic acid and pathogens.</text>
</comment>
<comment type="miscellaneous">
    <text>Constitutive expression at high level causes severe abnormality in plant growth.</text>
</comment>
<comment type="similarity">
    <text evidence="5">Belongs to the WRKY group II-a family.</text>
</comment>
<comment type="sequence caution" evidence="5">
    <conflict type="erroneous gene model prediction">
        <sequence resource="EMBL-CDS" id="CAA19743"/>
    </conflict>
</comment>
<comment type="sequence caution" evidence="5">
    <conflict type="erroneous gene model prediction">
        <sequence resource="EMBL-CDS" id="CAB79898"/>
    </conflict>
</comment>
<dbReference type="EMBL" id="AF224698">
    <property type="protein sequence ID" value="AAK28308.1"/>
    <property type="molecule type" value="mRNA"/>
</dbReference>
<dbReference type="EMBL" id="AL031004">
    <property type="protein sequence ID" value="CAA19743.1"/>
    <property type="status" value="ALT_SEQ"/>
    <property type="molecule type" value="Genomic_DNA"/>
</dbReference>
<dbReference type="EMBL" id="AL161579">
    <property type="protein sequence ID" value="CAB79898.1"/>
    <property type="status" value="ALT_SEQ"/>
    <property type="molecule type" value="Genomic_DNA"/>
</dbReference>
<dbReference type="EMBL" id="CP002687">
    <property type="protein sequence ID" value="AEE85960.1"/>
    <property type="molecule type" value="Genomic_DNA"/>
</dbReference>
<dbReference type="EMBL" id="AF428421">
    <property type="protein sequence ID" value="AAL16190.1"/>
    <property type="molecule type" value="mRNA"/>
</dbReference>
<dbReference type="EMBL" id="AY125557">
    <property type="protein sequence ID" value="AAM78067.1"/>
    <property type="molecule type" value="mRNA"/>
</dbReference>
<dbReference type="EMBL" id="AY088048">
    <property type="protein sequence ID" value="AAM65594.1"/>
    <property type="molecule type" value="mRNA"/>
</dbReference>
<dbReference type="RefSeq" id="NP_567882.1">
    <molecule id="Q9C5T4-1"/>
    <property type="nucleotide sequence ID" value="NM_119329.4"/>
</dbReference>
<dbReference type="PDB" id="7Z0R">
    <property type="method" value="X-ray"/>
    <property type="resolution" value="1.66 A"/>
    <property type="chains" value="A/B=160-238"/>
</dbReference>
<dbReference type="PDB" id="7Z0U">
    <property type="method" value="X-ray"/>
    <property type="resolution" value="2.85 A"/>
    <property type="chains" value="A=159-238"/>
</dbReference>
<dbReference type="PDBsum" id="7Z0R"/>
<dbReference type="PDBsum" id="7Z0U"/>
<dbReference type="SMR" id="Q9C5T4"/>
<dbReference type="BioGRID" id="14594">
    <property type="interactions" value="13"/>
</dbReference>
<dbReference type="FunCoup" id="Q9C5T4">
    <property type="interactions" value="6"/>
</dbReference>
<dbReference type="IntAct" id="Q9C5T4">
    <property type="interactions" value="12"/>
</dbReference>
<dbReference type="STRING" id="3702.Q9C5T4"/>
<dbReference type="iPTMnet" id="Q9C5T4"/>
<dbReference type="PaxDb" id="3702-AT4G31800.1"/>
<dbReference type="ProteomicsDB" id="234174">
    <molecule id="Q9C5T4-1"/>
</dbReference>
<dbReference type="EnsemblPlants" id="AT4G31800.1">
    <molecule id="Q9C5T4-1"/>
    <property type="protein sequence ID" value="AT4G31800.1"/>
    <property type="gene ID" value="AT4G31800"/>
</dbReference>
<dbReference type="GeneID" id="829308"/>
<dbReference type="Gramene" id="AT4G31800.1">
    <molecule id="Q9C5T4-1"/>
    <property type="protein sequence ID" value="AT4G31800.1"/>
    <property type="gene ID" value="AT4G31800"/>
</dbReference>
<dbReference type="KEGG" id="ath:AT4G31800"/>
<dbReference type="Araport" id="AT4G31800"/>
<dbReference type="TAIR" id="AT4G31800">
    <property type="gene designation" value="WRKY18"/>
</dbReference>
<dbReference type="eggNOG" id="ENOG502QR7M">
    <property type="taxonomic scope" value="Eukaryota"/>
</dbReference>
<dbReference type="InParanoid" id="Q9C5T4"/>
<dbReference type="OMA" id="KYYALHH"/>
<dbReference type="PhylomeDB" id="Q9C5T4"/>
<dbReference type="PRO" id="PR:Q9C5T4"/>
<dbReference type="Proteomes" id="UP000006548">
    <property type="component" value="Chromosome 4"/>
</dbReference>
<dbReference type="ExpressionAtlas" id="Q9C5T4">
    <property type="expression patterns" value="baseline and differential"/>
</dbReference>
<dbReference type="GO" id="GO:0005634">
    <property type="term" value="C:nucleus"/>
    <property type="evidence" value="ECO:0000314"/>
    <property type="project" value="TAIR"/>
</dbReference>
<dbReference type="GO" id="GO:0003700">
    <property type="term" value="F:DNA-binding transcription factor activity"/>
    <property type="evidence" value="ECO:0000314"/>
    <property type="project" value="TAIR"/>
</dbReference>
<dbReference type="GO" id="GO:0042802">
    <property type="term" value="F:identical protein binding"/>
    <property type="evidence" value="ECO:0000353"/>
    <property type="project" value="IntAct"/>
</dbReference>
<dbReference type="GO" id="GO:0043565">
    <property type="term" value="F:sequence-specific DNA binding"/>
    <property type="evidence" value="ECO:0007669"/>
    <property type="project" value="InterPro"/>
</dbReference>
<dbReference type="GO" id="GO:0042742">
    <property type="term" value="P:defense response to bacterium"/>
    <property type="evidence" value="ECO:0000270"/>
    <property type="project" value="TAIR"/>
</dbReference>
<dbReference type="GO" id="GO:0050832">
    <property type="term" value="P:defense response to fungus"/>
    <property type="evidence" value="ECO:0000270"/>
    <property type="project" value="TAIR"/>
</dbReference>
<dbReference type="GO" id="GO:0031347">
    <property type="term" value="P:regulation of defense response"/>
    <property type="evidence" value="ECO:0000315"/>
    <property type="project" value="TAIR"/>
</dbReference>
<dbReference type="GO" id="GO:0002237">
    <property type="term" value="P:response to molecule of bacterial origin"/>
    <property type="evidence" value="ECO:0000315"/>
    <property type="project" value="TAIR"/>
</dbReference>
<dbReference type="GO" id="GO:0009751">
    <property type="term" value="P:response to salicylic acid"/>
    <property type="evidence" value="ECO:0000270"/>
    <property type="project" value="TAIR"/>
</dbReference>
<dbReference type="FunFam" id="2.20.25.80:FF:000008">
    <property type="entry name" value="WRKY transcription factor 40"/>
    <property type="match status" value="1"/>
</dbReference>
<dbReference type="Gene3D" id="2.20.25.80">
    <property type="entry name" value="WRKY domain"/>
    <property type="match status" value="1"/>
</dbReference>
<dbReference type="InterPro" id="IPR003657">
    <property type="entry name" value="WRKY_dom"/>
</dbReference>
<dbReference type="InterPro" id="IPR036576">
    <property type="entry name" value="WRKY_dom_sf"/>
</dbReference>
<dbReference type="InterPro" id="IPR044810">
    <property type="entry name" value="WRKY_plant"/>
</dbReference>
<dbReference type="PANTHER" id="PTHR31429:SF76">
    <property type="entry name" value="WRKY FAMILY TRANSCRIPTION FACTOR-RELATED"/>
    <property type="match status" value="1"/>
</dbReference>
<dbReference type="PANTHER" id="PTHR31429">
    <property type="entry name" value="WRKY TRANSCRIPTION FACTOR 36-RELATED"/>
    <property type="match status" value="1"/>
</dbReference>
<dbReference type="Pfam" id="PF03106">
    <property type="entry name" value="WRKY"/>
    <property type="match status" value="1"/>
</dbReference>
<dbReference type="SMART" id="SM00774">
    <property type="entry name" value="WRKY"/>
    <property type="match status" value="1"/>
</dbReference>
<dbReference type="SUPFAM" id="SSF118290">
    <property type="entry name" value="WRKY DNA-binding domain"/>
    <property type="match status" value="1"/>
</dbReference>
<dbReference type="PROSITE" id="PS50811">
    <property type="entry name" value="WRKY"/>
    <property type="match status" value="1"/>
</dbReference>
<gene>
    <name type="primary">WRKY18</name>
    <name type="ordered locus">At4g31800</name>
    <name type="ORF">F28M20.10</name>
</gene>
<keyword id="KW-0002">3D-structure</keyword>
<keyword id="KW-0025">Alternative splicing</keyword>
<keyword id="KW-0238">DNA-binding</keyword>
<keyword id="KW-0539">Nucleus</keyword>
<keyword id="KW-1185">Reference proteome</keyword>
<keyword id="KW-0804">Transcription</keyword>
<keyword id="KW-0805">Transcription regulation</keyword>
<evidence type="ECO:0000255" key="1">
    <source>
        <dbReference type="PROSITE-ProRule" id="PRU00223"/>
    </source>
</evidence>
<evidence type="ECO:0000256" key="2">
    <source>
        <dbReference type="SAM" id="MobiDB-lite"/>
    </source>
</evidence>
<evidence type="ECO:0000269" key="3">
    <source>
    </source>
</evidence>
<evidence type="ECO:0000269" key="4">
    <source>
    </source>
</evidence>
<evidence type="ECO:0000305" key="5"/>
<evidence type="ECO:0007829" key="6">
    <source>
        <dbReference type="PDB" id="7Z0R"/>
    </source>
</evidence>